<protein>
    <recommendedName>
        <fullName evidence="7">YAP1-binding protein 2</fullName>
    </recommendedName>
    <alternativeName>
        <fullName evidence="7">YBP1 homolog protein 1</fullName>
    </alternativeName>
</protein>
<sequence length="641" mass="73102">MYNEQVNSGKSIKEKERYLDALLKILKDNPVTLKEIGWDLPKGLLQFFSRKNINVNIHLVFSPLVSSVMECFNELAINGNPKECLLTACELVSTLHIVLTETGDSDEENEDLNDSNRNDASNITDELSVITPEIGHYMAKNTVEFIPNLKIYVLFEFMSLLLKRVDTLYPSKFLAMVTSAIIKYVTTNVQAMDDPHFILRIVYNFCTNYSPAQPSASLTDGISTNDLEKIHDDESALQKKLLANLSVFVISNCLKNHPGNIDKIYFKTLMHKKTDENEIDASVLQICHQYYEYVTSLDVHMKELLEKCLVESRSIYNSLLMNPAASTPEFKEEINQLVYEVSYAYQIKKLADEKNLELDQYGVVILSAIHYSKNGTHLLPQIDIQSAIYLYLRCTTASLFSEIYENKFLESSVRYWLWVSTTETSTEKIKCALQELPGHITTAFLQMLLMKTCNESNNDTKLTEITLLRRLLYLMPESTSFTFIFETLLHCPYITAKIAVLDILRDMMIRSPEAANRDETVGLIEQQNPGNTANSVPIMPTLPPRPYITINEDRMASIHSIALICFSAAKQKKRTQGDLLLVLTYMKFFVSLRNKWDLGLLTLINKEISESFQGEGEPELAFINISNNTLGEYIEEMNIRS</sequence>
<reference key="1">
    <citation type="journal article" date="1997" name="Yeast">
        <title>The characterization of two new clusters of duplicated genes suggests a 'Lego' organization of the yeast Saccharomyces cerevisiae chromosomes.</title>
        <authorList>
            <person name="Feuermann M."/>
            <person name="de Montigny J."/>
            <person name="Potier S."/>
            <person name="Souciet J.-L."/>
        </authorList>
    </citation>
    <scope>NUCLEOTIDE SEQUENCE [GENOMIC DNA]</scope>
    <source>
        <strain>ATCC 204508 / S288c</strain>
    </source>
</reference>
<reference key="2">
    <citation type="journal article" date="1997" name="Nature">
        <title>The nucleotide sequence of Saccharomyces cerevisiae chromosome VII.</title>
        <authorList>
            <person name="Tettelin H."/>
            <person name="Agostoni-Carbone M.L."/>
            <person name="Albermann K."/>
            <person name="Albers M."/>
            <person name="Arroyo J."/>
            <person name="Backes U."/>
            <person name="Barreiros T."/>
            <person name="Bertani I."/>
            <person name="Bjourson A.J."/>
            <person name="Brueckner M."/>
            <person name="Bruschi C.V."/>
            <person name="Carignani G."/>
            <person name="Castagnoli L."/>
            <person name="Cerdan E."/>
            <person name="Clemente M.L."/>
            <person name="Coblenz A."/>
            <person name="Coglievina M."/>
            <person name="Coissac E."/>
            <person name="Defoor E."/>
            <person name="Del Bino S."/>
            <person name="Delius H."/>
            <person name="Delneri D."/>
            <person name="de Wergifosse P."/>
            <person name="Dujon B."/>
            <person name="Durand P."/>
            <person name="Entian K.-D."/>
            <person name="Eraso P."/>
            <person name="Escribano V."/>
            <person name="Fabiani L."/>
            <person name="Fartmann B."/>
            <person name="Feroli F."/>
            <person name="Feuermann M."/>
            <person name="Frontali L."/>
            <person name="Garcia-Gonzalez M."/>
            <person name="Garcia-Saez M.I."/>
            <person name="Goffeau A."/>
            <person name="Guerreiro P."/>
            <person name="Hani J."/>
            <person name="Hansen M."/>
            <person name="Hebling U."/>
            <person name="Hernandez K."/>
            <person name="Heumann K."/>
            <person name="Hilger F."/>
            <person name="Hofmann B."/>
            <person name="Indge K.J."/>
            <person name="James C.M."/>
            <person name="Klima R."/>
            <person name="Koetter P."/>
            <person name="Kramer B."/>
            <person name="Kramer W."/>
            <person name="Lauquin G."/>
            <person name="Leuther H."/>
            <person name="Louis E.J."/>
            <person name="Maillier E."/>
            <person name="Marconi A."/>
            <person name="Martegani E."/>
            <person name="Mazon M.J."/>
            <person name="Mazzoni C."/>
            <person name="McReynolds A.D.K."/>
            <person name="Melchioretto P."/>
            <person name="Mewes H.-W."/>
            <person name="Minenkova O."/>
            <person name="Mueller-Auer S."/>
            <person name="Nawrocki A."/>
            <person name="Netter P."/>
            <person name="Neu R."/>
            <person name="Nombela C."/>
            <person name="Oliver S.G."/>
            <person name="Panzeri L."/>
            <person name="Paoluzi S."/>
            <person name="Plevani P."/>
            <person name="Portetelle D."/>
            <person name="Portillo F."/>
            <person name="Potier S."/>
            <person name="Purnelle B."/>
            <person name="Rieger M."/>
            <person name="Riles L."/>
            <person name="Rinaldi T."/>
            <person name="Robben J."/>
            <person name="Rodrigues-Pousada C."/>
            <person name="Rodriguez-Belmonte E."/>
            <person name="Rodriguez-Torres A.M."/>
            <person name="Rose M."/>
            <person name="Ruzzi M."/>
            <person name="Saliola M."/>
            <person name="Sanchez-Perez M."/>
            <person name="Schaefer B."/>
            <person name="Schaefer M."/>
            <person name="Scharfe M."/>
            <person name="Schmidheini T."/>
            <person name="Schreer A."/>
            <person name="Skala J."/>
            <person name="Souciet J.-L."/>
            <person name="Steensma H.Y."/>
            <person name="Talla E."/>
            <person name="Thierry A."/>
            <person name="Vandenbol M."/>
            <person name="van der Aart Q.J.M."/>
            <person name="Van Dyck L."/>
            <person name="Vanoni M."/>
            <person name="Verhasselt P."/>
            <person name="Voet M."/>
            <person name="Volckaert G."/>
            <person name="Wambutt R."/>
            <person name="Watson M.D."/>
            <person name="Weber N."/>
            <person name="Wedler E."/>
            <person name="Wedler H."/>
            <person name="Wipfli P."/>
            <person name="Wolf K."/>
            <person name="Wright L.F."/>
            <person name="Zaccaria P."/>
            <person name="Zimmermann M."/>
            <person name="Zollner A."/>
            <person name="Kleine K."/>
        </authorList>
    </citation>
    <scope>NUCLEOTIDE SEQUENCE [LARGE SCALE GENOMIC DNA]</scope>
    <source>
        <strain>ATCC 204508 / S288c</strain>
    </source>
</reference>
<reference key="3">
    <citation type="journal article" date="2014" name="G3 (Bethesda)">
        <title>The reference genome sequence of Saccharomyces cerevisiae: Then and now.</title>
        <authorList>
            <person name="Engel S.R."/>
            <person name="Dietrich F.S."/>
            <person name="Fisk D.G."/>
            <person name="Binkley G."/>
            <person name="Balakrishnan R."/>
            <person name="Costanzo M.C."/>
            <person name="Dwight S.S."/>
            <person name="Hitz B.C."/>
            <person name="Karra K."/>
            <person name="Nash R.S."/>
            <person name="Weng S."/>
            <person name="Wong E.D."/>
            <person name="Lloyd P."/>
            <person name="Skrzypek M.S."/>
            <person name="Miyasato S.R."/>
            <person name="Simison M."/>
            <person name="Cherry J.M."/>
        </authorList>
    </citation>
    <scope>GENOME REANNOTATION</scope>
    <source>
        <strain>ATCC 204508 / S288c</strain>
    </source>
</reference>
<reference key="4">
    <citation type="journal article" date="1999" name="Proc. Natl. Acad. Sci. U.S.A.">
        <title>Global response of Saccharomyces cerevisiae to an alkylating agent.</title>
        <authorList>
            <person name="Jelinsky S.A."/>
            <person name="Samson L.D."/>
        </authorList>
    </citation>
    <scope>FUNCTION</scope>
    <scope>ALKYLATING STRESS INDUCED EXPRESSION</scope>
</reference>
<reference key="5">
    <citation type="journal article" date="2001" name="Curr. Genet.">
        <title>Transposon mutagenesis reveals novel loci affecting tolerance to salt stress and growth at low temperature.</title>
        <authorList>
            <person name="de Jesus Ferreira M.C."/>
            <person name="Bao X."/>
            <person name="Laize V."/>
            <person name="Hohmann S."/>
        </authorList>
    </citation>
    <scope>FUNCTION</scope>
    <scope>STRESS INDUCED EXPRESSION</scope>
</reference>
<reference key="6">
    <citation type="journal article" date="2003" name="J. Biol. Chem.">
        <title>Ybp1 is required for the hydrogen peroxide-induced oxidation of the Yap1 transcription factor.</title>
        <authorList>
            <person name="Veal E.A."/>
            <person name="Ross S.J."/>
            <person name="Malakasi P."/>
            <person name="Peacock E."/>
            <person name="Morgan B.A."/>
        </authorList>
    </citation>
    <scope>FUNCTION</scope>
</reference>
<reference key="7">
    <citation type="journal article" date="2003" name="Nature">
        <title>Global analysis of protein localization in budding yeast.</title>
        <authorList>
            <person name="Huh W.-K."/>
            <person name="Falvo J.V."/>
            <person name="Gerke L.C."/>
            <person name="Carroll A.S."/>
            <person name="Howson R.W."/>
            <person name="Weissman J.S."/>
            <person name="O'Shea E.K."/>
        </authorList>
    </citation>
    <scope>SUBCELLULAR LOCATION [LARGE SCALE ANALYSIS]</scope>
</reference>
<reference key="8">
    <citation type="journal article" date="2003" name="Nature">
        <title>Global analysis of protein expression in yeast.</title>
        <authorList>
            <person name="Ghaemmaghami S."/>
            <person name="Huh W.-K."/>
            <person name="Bower K."/>
            <person name="Howson R.W."/>
            <person name="Belle A."/>
            <person name="Dephoure N."/>
            <person name="O'Shea E.K."/>
            <person name="Weissman J.S."/>
        </authorList>
    </citation>
    <scope>LEVEL OF PROTEIN EXPRESSION [LARGE SCALE ANALYSIS]</scope>
</reference>
<reference key="9">
    <citation type="journal article" date="2004" name="Eukaryot. Cell">
        <title>YBP1 and its homologue YBP2/YBH1 influence oxidative-stress tolerance by nonidentical mechanisms in Saccharomyces cerevisiae.</title>
        <authorList>
            <person name="Gulshan K."/>
            <person name="Rovinsky S.A."/>
            <person name="Moye-Rowley W.S."/>
        </authorList>
    </citation>
    <scope>FUNCTION</scope>
    <scope>DISRUPTION PHENOTYPE</scope>
    <scope>SUBCELLULAR LOCATION</scope>
</reference>
<organism>
    <name type="scientific">Saccharomyces cerevisiae (strain ATCC 204508 / S288c)</name>
    <name type="common">Baker's yeast</name>
    <dbReference type="NCBI Taxonomy" id="559292"/>
    <lineage>
        <taxon>Eukaryota</taxon>
        <taxon>Fungi</taxon>
        <taxon>Dikarya</taxon>
        <taxon>Ascomycota</taxon>
        <taxon>Saccharomycotina</taxon>
        <taxon>Saccharomycetes</taxon>
        <taxon>Saccharomycetales</taxon>
        <taxon>Saccharomycetaceae</taxon>
        <taxon>Saccharomyces</taxon>
    </lineage>
</organism>
<gene>
    <name evidence="7" type="primary">YBP2</name>
    <name evidence="7" type="synonym">YBH1</name>
    <name evidence="9" type="ordered locus">YGL060W</name>
</gene>
<feature type="chain" id="PRO_0000066151" description="YAP1-binding protein 2">
    <location>
        <begin position="1"/>
        <end position="641"/>
    </location>
</feature>
<evidence type="ECO:0000269" key="1">
    <source>
    </source>
</evidence>
<evidence type="ECO:0000269" key="2">
    <source>
    </source>
</evidence>
<evidence type="ECO:0000269" key="3">
    <source>
    </source>
</evidence>
<evidence type="ECO:0000269" key="4">
    <source>
    </source>
</evidence>
<evidence type="ECO:0000269" key="5">
    <source>
    </source>
</evidence>
<evidence type="ECO:0000269" key="6">
    <source>
    </source>
</evidence>
<evidence type="ECO:0000303" key="7">
    <source>
    </source>
</evidence>
<evidence type="ECO:0000305" key="8"/>
<evidence type="ECO:0000312" key="9">
    <source>
        <dbReference type="SGD" id="S000003028"/>
    </source>
</evidence>
<dbReference type="EMBL" id="Z72582">
    <property type="protein sequence ID" value="CAA96763.1"/>
    <property type="molecule type" value="Genomic_DNA"/>
</dbReference>
<dbReference type="EMBL" id="BK006941">
    <property type="protein sequence ID" value="DAA08042.1"/>
    <property type="molecule type" value="Genomic_DNA"/>
</dbReference>
<dbReference type="PIR" id="S64064">
    <property type="entry name" value="S64064"/>
</dbReference>
<dbReference type="RefSeq" id="NP_011455.1">
    <property type="nucleotide sequence ID" value="NM_001180925.1"/>
</dbReference>
<dbReference type="BioGRID" id="33187">
    <property type="interactions" value="155"/>
</dbReference>
<dbReference type="DIP" id="DIP-2073N"/>
<dbReference type="FunCoup" id="P53169">
    <property type="interactions" value="69"/>
</dbReference>
<dbReference type="IntAct" id="P53169">
    <property type="interactions" value="9"/>
</dbReference>
<dbReference type="MINT" id="P53169"/>
<dbReference type="STRING" id="4932.YGL060W"/>
<dbReference type="iPTMnet" id="P53169"/>
<dbReference type="PaxDb" id="4932-YGL060W"/>
<dbReference type="PeptideAtlas" id="P53169"/>
<dbReference type="EnsemblFungi" id="YGL060W_mRNA">
    <property type="protein sequence ID" value="YGL060W"/>
    <property type="gene ID" value="YGL060W"/>
</dbReference>
<dbReference type="GeneID" id="852820"/>
<dbReference type="KEGG" id="sce:YGL060W"/>
<dbReference type="AGR" id="SGD:S000003028"/>
<dbReference type="SGD" id="S000003028">
    <property type="gene designation" value="YBP2"/>
</dbReference>
<dbReference type="VEuPathDB" id="FungiDB:YGL060W"/>
<dbReference type="eggNOG" id="ENOG502QWJN">
    <property type="taxonomic scope" value="Eukaryota"/>
</dbReference>
<dbReference type="GeneTree" id="ENSGT00940000176740"/>
<dbReference type="HOGENOM" id="CLU_024514_0_0_1"/>
<dbReference type="InParanoid" id="P53169"/>
<dbReference type="OMA" id="VSSVMEC"/>
<dbReference type="OrthoDB" id="5396786at2759"/>
<dbReference type="BioCyc" id="YEAST:G3O-30568-MONOMER"/>
<dbReference type="BioGRID-ORCS" id="852820">
    <property type="hits" value="2 hits in 10 CRISPR screens"/>
</dbReference>
<dbReference type="PRO" id="PR:P53169"/>
<dbReference type="Proteomes" id="UP000002311">
    <property type="component" value="Chromosome VII"/>
</dbReference>
<dbReference type="RNAct" id="P53169">
    <property type="molecule type" value="protein"/>
</dbReference>
<dbReference type="GO" id="GO:0005737">
    <property type="term" value="C:cytoplasm"/>
    <property type="evidence" value="ECO:0007005"/>
    <property type="project" value="SGD"/>
</dbReference>
<dbReference type="GO" id="GO:0000776">
    <property type="term" value="C:kinetochore"/>
    <property type="evidence" value="ECO:0000314"/>
    <property type="project" value="SGD"/>
</dbReference>
<dbReference type="GO" id="GO:0034599">
    <property type="term" value="P:cellular response to oxidative stress"/>
    <property type="evidence" value="ECO:0000318"/>
    <property type="project" value="GO_Central"/>
</dbReference>
<dbReference type="GO" id="GO:0007052">
    <property type="term" value="P:mitotic spindle organization"/>
    <property type="evidence" value="ECO:0000316"/>
    <property type="project" value="SGD"/>
</dbReference>
<dbReference type="InterPro" id="IPR013877">
    <property type="entry name" value="YAP-bd/ALF4/Glomulin"/>
</dbReference>
<dbReference type="InterPro" id="IPR040347">
    <property type="entry name" value="YBP1/2"/>
</dbReference>
<dbReference type="PANTHER" id="PTHR28020">
    <property type="entry name" value="YAP1-BINDING PROTEIN 1-RELATED"/>
    <property type="match status" value="1"/>
</dbReference>
<dbReference type="PANTHER" id="PTHR28020:SF1">
    <property type="entry name" value="YAP1-BINDING PROTEIN 1-RELATED"/>
    <property type="match status" value="1"/>
</dbReference>
<dbReference type="Pfam" id="PF08568">
    <property type="entry name" value="Kinetochor_Ybp2"/>
    <property type="match status" value="1"/>
</dbReference>
<name>YBP2_YEAST</name>
<proteinExistence type="evidence at protein level"/>
<keyword id="KW-0963">Cytoplasm</keyword>
<keyword id="KW-1185">Reference proteome</keyword>
<keyword id="KW-0346">Stress response</keyword>
<comment type="function">
    <text evidence="1 2 5 6">Involved in oxidative stress response and redox homeostasis. Required for hydrogen peroxide-induced activation of YAP1. Acts in a parallele pathway to YBP1.</text>
</comment>
<comment type="interaction">
    <interactant intactId="EBI-23796">
        <id>P53169</id>
    </interactant>
    <interactant intactId="EBI-5412">
        <id>Q05080</id>
        <label>HOF1</label>
    </interactant>
    <organismsDiffer>false</organismsDiffer>
    <experiments>2</experiments>
</comment>
<comment type="interaction">
    <interactant intactId="EBI-23796">
        <id>P53169</id>
    </interactant>
    <interactant intactId="EBI-31686">
        <id>Q08273</id>
        <label>HRT1</label>
    </interactant>
    <organismsDiffer>false</organismsDiffer>
    <experiments>3</experiments>
</comment>
<comment type="interaction">
    <interactant intactId="EBI-23796">
        <id>P53169</id>
    </interactant>
    <interactant intactId="EBI-22980">
        <id>P43603</id>
        <label>LSB3</label>
    </interactant>
    <organismsDiffer>false</organismsDiffer>
    <experiments>2</experiments>
</comment>
<comment type="subcellular location">
    <subcellularLocation>
        <location evidence="3 5">Cytoplasm</location>
    </subcellularLocation>
</comment>
<comment type="disruption phenotype">
    <text evidence="5">Increases sensitivity to H(2)O(2) and decreases activation of YAP1-dependent gene expression.</text>
</comment>
<comment type="miscellaneous">
    <text evidence="4">Present with 3900 molecules/cell in log phase SD medium.</text>
</comment>
<comment type="similarity">
    <text evidence="8">Belongs to the YBP1 family.</text>
</comment>
<accession>P53169</accession>
<accession>D6VU81</accession>